<name>HYPA_AERHH</name>
<feature type="chain" id="PRO_1000023818" description="Hydrogenase maturation factor HypA">
    <location>
        <begin position="1"/>
        <end position="113"/>
    </location>
</feature>
<feature type="binding site" evidence="1">
    <location>
        <position position="2"/>
    </location>
    <ligand>
        <name>Ni(2+)</name>
        <dbReference type="ChEBI" id="CHEBI:49786"/>
    </ligand>
</feature>
<feature type="binding site" evidence="1">
    <location>
        <position position="73"/>
    </location>
    <ligand>
        <name>Zn(2+)</name>
        <dbReference type="ChEBI" id="CHEBI:29105"/>
    </ligand>
</feature>
<feature type="binding site" evidence="1">
    <location>
        <position position="76"/>
    </location>
    <ligand>
        <name>Zn(2+)</name>
        <dbReference type="ChEBI" id="CHEBI:29105"/>
    </ligand>
</feature>
<feature type="binding site" evidence="1">
    <location>
        <position position="89"/>
    </location>
    <ligand>
        <name>Zn(2+)</name>
        <dbReference type="ChEBI" id="CHEBI:29105"/>
    </ligand>
</feature>
<feature type="binding site" evidence="1">
    <location>
        <position position="92"/>
    </location>
    <ligand>
        <name>Zn(2+)</name>
        <dbReference type="ChEBI" id="CHEBI:29105"/>
    </ligand>
</feature>
<organism>
    <name type="scientific">Aeromonas hydrophila subsp. hydrophila (strain ATCC 7966 / DSM 30187 / BCRC 13018 / CCUG 14551 / JCM 1027 / KCTC 2358 / NCIMB 9240 / NCTC 8049)</name>
    <dbReference type="NCBI Taxonomy" id="380703"/>
    <lineage>
        <taxon>Bacteria</taxon>
        <taxon>Pseudomonadati</taxon>
        <taxon>Pseudomonadota</taxon>
        <taxon>Gammaproteobacteria</taxon>
        <taxon>Aeromonadales</taxon>
        <taxon>Aeromonadaceae</taxon>
        <taxon>Aeromonas</taxon>
    </lineage>
</organism>
<keyword id="KW-0479">Metal-binding</keyword>
<keyword id="KW-0533">Nickel</keyword>
<keyword id="KW-1185">Reference proteome</keyword>
<keyword id="KW-0862">Zinc</keyword>
<protein>
    <recommendedName>
        <fullName evidence="1">Hydrogenase maturation factor HypA</fullName>
    </recommendedName>
</protein>
<gene>
    <name evidence="1" type="primary">hypA</name>
    <name type="ordered locus">AHA_2514</name>
</gene>
<proteinExistence type="inferred from homology"/>
<dbReference type="EMBL" id="CP000462">
    <property type="protein sequence ID" value="ABK37593.1"/>
    <property type="molecule type" value="Genomic_DNA"/>
</dbReference>
<dbReference type="RefSeq" id="WP_005333346.1">
    <property type="nucleotide sequence ID" value="NC_008570.1"/>
</dbReference>
<dbReference type="RefSeq" id="YP_857027.1">
    <property type="nucleotide sequence ID" value="NC_008570.1"/>
</dbReference>
<dbReference type="SMR" id="A0KL76"/>
<dbReference type="STRING" id="380703.AHA_2514"/>
<dbReference type="EnsemblBacteria" id="ABK37593">
    <property type="protein sequence ID" value="ABK37593"/>
    <property type="gene ID" value="AHA_2514"/>
</dbReference>
<dbReference type="GeneID" id="4488308"/>
<dbReference type="KEGG" id="aha:AHA_2514"/>
<dbReference type="PATRIC" id="fig|380703.7.peg.2513"/>
<dbReference type="eggNOG" id="COG0375">
    <property type="taxonomic scope" value="Bacteria"/>
</dbReference>
<dbReference type="HOGENOM" id="CLU_126929_0_0_6"/>
<dbReference type="OrthoDB" id="288014at2"/>
<dbReference type="Proteomes" id="UP000000756">
    <property type="component" value="Chromosome"/>
</dbReference>
<dbReference type="GO" id="GO:0016151">
    <property type="term" value="F:nickel cation binding"/>
    <property type="evidence" value="ECO:0007669"/>
    <property type="project" value="UniProtKB-UniRule"/>
</dbReference>
<dbReference type="GO" id="GO:0008270">
    <property type="term" value="F:zinc ion binding"/>
    <property type="evidence" value="ECO:0007669"/>
    <property type="project" value="UniProtKB-UniRule"/>
</dbReference>
<dbReference type="GO" id="GO:0051604">
    <property type="term" value="P:protein maturation"/>
    <property type="evidence" value="ECO:0007669"/>
    <property type="project" value="InterPro"/>
</dbReference>
<dbReference type="GO" id="GO:0036211">
    <property type="term" value="P:protein modification process"/>
    <property type="evidence" value="ECO:0007669"/>
    <property type="project" value="UniProtKB-UniRule"/>
</dbReference>
<dbReference type="FunFam" id="3.30.2320.80:FF:000001">
    <property type="entry name" value="Hydrogenase maturation factor HypA"/>
    <property type="match status" value="1"/>
</dbReference>
<dbReference type="Gene3D" id="3.30.2320.80">
    <property type="match status" value="1"/>
</dbReference>
<dbReference type="HAMAP" id="MF_00213">
    <property type="entry name" value="HypA_HybF"/>
    <property type="match status" value="1"/>
</dbReference>
<dbReference type="InterPro" id="IPR020538">
    <property type="entry name" value="Hydgase_Ni_incorp_HypA/HybF_CS"/>
</dbReference>
<dbReference type="InterPro" id="IPR000688">
    <property type="entry name" value="HypA/HybF"/>
</dbReference>
<dbReference type="NCBIfam" id="TIGR00100">
    <property type="entry name" value="hypA"/>
    <property type="match status" value="1"/>
</dbReference>
<dbReference type="NCBIfam" id="NF009046">
    <property type="entry name" value="PRK12380.1"/>
    <property type="match status" value="1"/>
</dbReference>
<dbReference type="PANTHER" id="PTHR34535">
    <property type="entry name" value="HYDROGENASE MATURATION FACTOR HYPA"/>
    <property type="match status" value="1"/>
</dbReference>
<dbReference type="PANTHER" id="PTHR34535:SF3">
    <property type="entry name" value="HYDROGENASE MATURATION FACTOR HYPA"/>
    <property type="match status" value="1"/>
</dbReference>
<dbReference type="Pfam" id="PF01155">
    <property type="entry name" value="HypA"/>
    <property type="match status" value="1"/>
</dbReference>
<dbReference type="PIRSF" id="PIRSF004761">
    <property type="entry name" value="Hydrgn_mat_HypA"/>
    <property type="match status" value="1"/>
</dbReference>
<dbReference type="PROSITE" id="PS01249">
    <property type="entry name" value="HYPA"/>
    <property type="match status" value="1"/>
</dbReference>
<comment type="function">
    <text evidence="1">Involved in the maturation of [NiFe] hydrogenases. Required for nickel insertion into the metal center of the hydrogenase.</text>
</comment>
<comment type="similarity">
    <text evidence="1">Belongs to the HypA/HybF family.</text>
</comment>
<accession>A0KL76</accession>
<sequence length="113" mass="12205">MHEMSLAMAAIDLAAEQATQRGFTKVTALWLEVGSFSCVDPDTIAFCFEAAAKGTAVEGAQLHFQHQAAEAWCYDCNKTVTLTERGQACPECGGYKLRVAQGDSLRITDIEVS</sequence>
<evidence type="ECO:0000255" key="1">
    <source>
        <dbReference type="HAMAP-Rule" id="MF_00213"/>
    </source>
</evidence>
<reference key="1">
    <citation type="journal article" date="2006" name="J. Bacteriol.">
        <title>Genome sequence of Aeromonas hydrophila ATCC 7966T: jack of all trades.</title>
        <authorList>
            <person name="Seshadri R."/>
            <person name="Joseph S.W."/>
            <person name="Chopra A.K."/>
            <person name="Sha J."/>
            <person name="Shaw J."/>
            <person name="Graf J."/>
            <person name="Haft D.H."/>
            <person name="Wu M."/>
            <person name="Ren Q."/>
            <person name="Rosovitz M.J."/>
            <person name="Madupu R."/>
            <person name="Tallon L."/>
            <person name="Kim M."/>
            <person name="Jin S."/>
            <person name="Vuong H."/>
            <person name="Stine O.C."/>
            <person name="Ali A."/>
            <person name="Horneman A.J."/>
            <person name="Heidelberg J.F."/>
        </authorList>
    </citation>
    <scope>NUCLEOTIDE SEQUENCE [LARGE SCALE GENOMIC DNA]</scope>
    <source>
        <strain>ATCC 7966 / DSM 30187 / BCRC 13018 / CCUG 14551 / JCM 1027 / KCTC 2358 / NCIMB 9240 / NCTC 8049</strain>
    </source>
</reference>